<reference key="1">
    <citation type="journal article" date="1996" name="Science">
        <title>Complete genome sequence of the methanogenic archaeon, Methanococcus jannaschii.</title>
        <authorList>
            <person name="Bult C.J."/>
            <person name="White O."/>
            <person name="Olsen G.J."/>
            <person name="Zhou L."/>
            <person name="Fleischmann R.D."/>
            <person name="Sutton G.G."/>
            <person name="Blake J.A."/>
            <person name="FitzGerald L.M."/>
            <person name="Clayton R.A."/>
            <person name="Gocayne J.D."/>
            <person name="Kerlavage A.R."/>
            <person name="Dougherty B.A."/>
            <person name="Tomb J.-F."/>
            <person name="Adams M.D."/>
            <person name="Reich C.I."/>
            <person name="Overbeek R."/>
            <person name="Kirkness E.F."/>
            <person name="Weinstock K.G."/>
            <person name="Merrick J.M."/>
            <person name="Glodek A."/>
            <person name="Scott J.L."/>
            <person name="Geoghagen N.S.M."/>
            <person name="Weidman J.F."/>
            <person name="Fuhrmann J.L."/>
            <person name="Nguyen D."/>
            <person name="Utterback T.R."/>
            <person name="Kelley J.M."/>
            <person name="Peterson J.D."/>
            <person name="Sadow P.W."/>
            <person name="Hanna M.C."/>
            <person name="Cotton M.D."/>
            <person name="Roberts K.M."/>
            <person name="Hurst M.A."/>
            <person name="Kaine B.P."/>
            <person name="Borodovsky M."/>
            <person name="Klenk H.-P."/>
            <person name="Fraser C.M."/>
            <person name="Smith H.O."/>
            <person name="Woese C.R."/>
            <person name="Venter J.C."/>
        </authorList>
    </citation>
    <scope>NUCLEOTIDE SEQUENCE [LARGE SCALE GENOMIC DNA]</scope>
    <source>
        <strain>ATCC 43067 / DSM 2661 / JAL-1 / JCM 10045 / NBRC 100440</strain>
    </source>
</reference>
<dbReference type="EMBL" id="L77117">
    <property type="protein sequence ID" value="AAB98747.1"/>
    <property type="molecule type" value="Genomic_DNA"/>
</dbReference>
<dbReference type="PIR" id="G64393">
    <property type="entry name" value="G64393"/>
</dbReference>
<dbReference type="SMR" id="Q58161"/>
<dbReference type="FunCoup" id="Q58161">
    <property type="interactions" value="1"/>
</dbReference>
<dbReference type="STRING" id="243232.MJ_0751"/>
<dbReference type="PaxDb" id="243232-MJ_0751"/>
<dbReference type="EnsemblBacteria" id="AAB98747">
    <property type="protein sequence ID" value="AAB98747"/>
    <property type="gene ID" value="MJ_0751"/>
</dbReference>
<dbReference type="KEGG" id="mja:MJ_0751"/>
<dbReference type="eggNOG" id="arCOG00680">
    <property type="taxonomic scope" value="Archaea"/>
</dbReference>
<dbReference type="HOGENOM" id="CLU_1053140_0_0_2"/>
<dbReference type="InParanoid" id="Q58161"/>
<dbReference type="OrthoDB" id="66083at2157"/>
<dbReference type="PhylomeDB" id="Q58161"/>
<dbReference type="Proteomes" id="UP000000805">
    <property type="component" value="Chromosome"/>
</dbReference>
<dbReference type="GO" id="GO:0003677">
    <property type="term" value="F:DNA binding"/>
    <property type="evidence" value="ECO:0007669"/>
    <property type="project" value="UniProtKB-KW"/>
</dbReference>
<dbReference type="GO" id="GO:0046872">
    <property type="term" value="F:metal ion binding"/>
    <property type="evidence" value="ECO:0007669"/>
    <property type="project" value="UniProtKB-KW"/>
</dbReference>
<dbReference type="GO" id="GO:0006310">
    <property type="term" value="P:DNA recombination"/>
    <property type="evidence" value="ECO:0007669"/>
    <property type="project" value="UniProtKB-KW"/>
</dbReference>
<dbReference type="GO" id="GO:0032196">
    <property type="term" value="P:transposition"/>
    <property type="evidence" value="ECO:0007669"/>
    <property type="project" value="UniProtKB-KW"/>
</dbReference>
<dbReference type="InterPro" id="IPR010095">
    <property type="entry name" value="Cas12f1-like_TNB"/>
</dbReference>
<dbReference type="NCBIfam" id="NF040570">
    <property type="entry name" value="guided_TnpB"/>
    <property type="match status" value="1"/>
</dbReference>
<dbReference type="NCBIfam" id="TIGR01766">
    <property type="entry name" value="IS200/IS605 family accessory protein TnpB-like domain"/>
    <property type="match status" value="1"/>
</dbReference>
<dbReference type="Pfam" id="PF07282">
    <property type="entry name" value="Cas12f1-like_TNB"/>
    <property type="match status" value="1"/>
</dbReference>
<dbReference type="SUPFAM" id="SSF75712">
    <property type="entry name" value="Rad50 coiled-coil Zn hook"/>
    <property type="match status" value="1"/>
</dbReference>
<proteinExistence type="inferred from homology"/>
<accession>Q58161</accession>
<organism>
    <name type="scientific">Methanocaldococcus jannaschii (strain ATCC 43067 / DSM 2661 / JAL-1 / JCM 10045 / NBRC 100440)</name>
    <name type="common">Methanococcus jannaschii</name>
    <dbReference type="NCBI Taxonomy" id="243232"/>
    <lineage>
        <taxon>Archaea</taxon>
        <taxon>Methanobacteriati</taxon>
        <taxon>Methanobacteriota</taxon>
        <taxon>Methanomada group</taxon>
        <taxon>Methanococci</taxon>
        <taxon>Methanococcales</taxon>
        <taxon>Methanocaldococcaceae</taxon>
        <taxon>Methanocaldococcus</taxon>
    </lineage>
</organism>
<feature type="chain" id="PRO_0000107013" description="TnpB-like protein MJ0751">
    <location>
        <begin position="1"/>
        <end position="278"/>
    </location>
</feature>
<feature type="binding site" evidence="1">
    <location>
        <position position="222"/>
    </location>
    <ligand>
        <name>Zn(2+)</name>
        <dbReference type="ChEBI" id="CHEBI:29105"/>
    </ligand>
</feature>
<feature type="binding site" evidence="1">
    <location>
        <position position="225"/>
    </location>
    <ligand>
        <name>Zn(2+)</name>
        <dbReference type="ChEBI" id="CHEBI:29105"/>
    </ligand>
</feature>
<feature type="binding site" evidence="1">
    <location>
        <position position="239"/>
    </location>
    <ligand>
        <name>Zn(2+)</name>
        <dbReference type="ChEBI" id="CHEBI:29105"/>
    </ligand>
</feature>
<feature type="binding site" evidence="1">
    <location>
        <position position="242"/>
    </location>
    <ligand>
        <name>Zn(2+)</name>
        <dbReference type="ChEBI" id="CHEBI:29105"/>
    </ligand>
</feature>
<keyword id="KW-0233">DNA recombination</keyword>
<keyword id="KW-0238">DNA-binding</keyword>
<keyword id="KW-0479">Metal-binding</keyword>
<keyword id="KW-1185">Reference proteome</keyword>
<keyword id="KW-0814">Transposable element</keyword>
<keyword id="KW-0815">Transposition</keyword>
<keyword id="KW-0862">Zinc</keyword>
<name>Y751_METJA</name>
<gene>
    <name type="ordered locus">MJ0751</name>
</gene>
<sequence>MLFKFEGDKIKIITAPRKFITINLVVSDYQKKFIEEWKNGNFKIGEVIIKKDSIIIPFKKVVNPKNFEHIMTIDINEKNITYSIFDKDGNVIKTTRLDVYKLKRIHENFSKKREKIQKKLSNKPMKLKTLMEKYSGREKRKVEDYLHKISKFLISEALKYNVKILMEDLTNIREAVNKKSKNFRRRLNRWNFSKLQFFIEYKAKWDGLDVEYVNPSRTSKLCPICGCKLDPNGQRLLKCNNCNLVFDRDVVATFNLFKKSQDVGSFRSPERSLMKSSY</sequence>
<protein>
    <recommendedName>
        <fullName>TnpB-like protein MJ0751</fullName>
    </recommendedName>
</protein>
<evidence type="ECO:0000250" key="1">
    <source>
        <dbReference type="UniProtKB" id="Q7DF80"/>
    </source>
</evidence>
<evidence type="ECO:0000305" key="2"/>
<comment type="similarity">
    <text evidence="2">In the N-terminal section; belongs to the transposase 2 family.</text>
</comment>
<comment type="similarity">
    <text evidence="2">In the C-terminal section; belongs to the transposase 35 family.</text>
</comment>